<comment type="function">
    <text evidence="1">Probable transcription factor.</text>
</comment>
<comment type="subcellular location">
    <subcellularLocation>
        <location evidence="8">Nucleus</location>
    </subcellularLocation>
</comment>
<comment type="tissue specificity">
    <text evidence="7">Expressed in stems, leaf sheaths and blades and panicles.</text>
</comment>
<comment type="induction">
    <text evidence="6">Repressed by miR166 in the shoot apicam meristem (SAM) region of developing embryo.</text>
</comment>
<comment type="similarity">
    <text evidence="8">Belongs to the HD-ZIP homeobox family. Class III subfamily.</text>
</comment>
<comment type="sequence caution" evidence="8">
    <conflict type="erroneous gene model prediction">
        <sequence resource="EMBL-CDS" id="AAN61485"/>
    </conflict>
</comment>
<comment type="sequence caution" evidence="8">
    <conflict type="erroneous gene model prediction">
        <sequence resource="EMBL-CDS" id="EAZ25309"/>
    </conflict>
</comment>
<proteinExistence type="evidence at transcript level"/>
<dbReference type="EMBL" id="AY425991">
    <property type="protein sequence ID" value="AAR04340.1"/>
    <property type="molecule type" value="mRNA"/>
</dbReference>
<dbReference type="EMBL" id="AC105733">
    <property type="protein sequence ID" value="AAN61485.1"/>
    <property type="status" value="ALT_SEQ"/>
    <property type="molecule type" value="Genomic_DNA"/>
</dbReference>
<dbReference type="EMBL" id="DP000009">
    <property type="protein sequence ID" value="ABF93574.1"/>
    <property type="molecule type" value="Genomic_DNA"/>
</dbReference>
<dbReference type="EMBL" id="AP008209">
    <property type="protein sequence ID" value="BAF10621.1"/>
    <property type="molecule type" value="Genomic_DNA"/>
</dbReference>
<dbReference type="EMBL" id="AP014959">
    <property type="protein sequence ID" value="BAS81903.1"/>
    <property type="molecule type" value="Genomic_DNA"/>
</dbReference>
<dbReference type="EMBL" id="CM000140">
    <property type="protein sequence ID" value="EAZ25309.1"/>
    <property type="status" value="ALT_SEQ"/>
    <property type="molecule type" value="Genomic_DNA"/>
</dbReference>
<dbReference type="EMBL" id="AK102378">
    <property type="protein sequence ID" value="BAG95526.1"/>
    <property type="molecule type" value="mRNA"/>
</dbReference>
<dbReference type="EMBL" id="AJ556802">
    <property type="protein sequence ID" value="CAD89206.1"/>
    <property type="molecule type" value="mRNA"/>
</dbReference>
<dbReference type="RefSeq" id="XP_015632709.1">
    <property type="nucleotide sequence ID" value="XM_015777223.1"/>
</dbReference>
<dbReference type="RefSeq" id="XP_015632710.1">
    <property type="nucleotide sequence ID" value="XM_015777224.1"/>
</dbReference>
<dbReference type="SMR" id="Q6TAQ6"/>
<dbReference type="FunCoup" id="Q6TAQ6">
    <property type="interactions" value="1430"/>
</dbReference>
<dbReference type="STRING" id="39947.Q6TAQ6"/>
<dbReference type="PaxDb" id="39947-Q6TAQ6"/>
<dbReference type="EnsemblPlants" id="Os03t0109400-02">
    <property type="protein sequence ID" value="Os03t0109400-02"/>
    <property type="gene ID" value="Os03g0109400"/>
</dbReference>
<dbReference type="Gramene" id="Os03t0109400-02">
    <property type="protein sequence ID" value="Os03t0109400-02"/>
    <property type="gene ID" value="Os03g0109400"/>
</dbReference>
<dbReference type="KEGG" id="dosa:Os03g0109400"/>
<dbReference type="eggNOG" id="ENOG502QRJM">
    <property type="taxonomic scope" value="Eukaryota"/>
</dbReference>
<dbReference type="HOGENOM" id="CLU_012517_0_0_1"/>
<dbReference type="InParanoid" id="Q6TAQ6"/>
<dbReference type="OMA" id="WSLINCD"/>
<dbReference type="OrthoDB" id="125004at2759"/>
<dbReference type="Proteomes" id="UP000000763">
    <property type="component" value="Chromosome 3"/>
</dbReference>
<dbReference type="Proteomes" id="UP000007752">
    <property type="component" value="Chromosome 3"/>
</dbReference>
<dbReference type="Proteomes" id="UP000059680">
    <property type="component" value="Chromosome 3"/>
</dbReference>
<dbReference type="ExpressionAtlas" id="Q6TAQ6">
    <property type="expression patterns" value="baseline and differential"/>
</dbReference>
<dbReference type="GO" id="GO:0005634">
    <property type="term" value="C:nucleus"/>
    <property type="evidence" value="ECO:0007669"/>
    <property type="project" value="UniProtKB-SubCell"/>
</dbReference>
<dbReference type="GO" id="GO:0003677">
    <property type="term" value="F:DNA binding"/>
    <property type="evidence" value="ECO:0007669"/>
    <property type="project" value="UniProtKB-KW"/>
</dbReference>
<dbReference type="GO" id="GO:0003700">
    <property type="term" value="F:DNA-binding transcription factor activity"/>
    <property type="evidence" value="ECO:0007669"/>
    <property type="project" value="InterPro"/>
</dbReference>
<dbReference type="GO" id="GO:0008289">
    <property type="term" value="F:lipid binding"/>
    <property type="evidence" value="ECO:0007669"/>
    <property type="project" value="InterPro"/>
</dbReference>
<dbReference type="CDD" id="cd14686">
    <property type="entry name" value="bZIP"/>
    <property type="match status" value="1"/>
</dbReference>
<dbReference type="CDD" id="cd00086">
    <property type="entry name" value="homeodomain"/>
    <property type="match status" value="1"/>
</dbReference>
<dbReference type="CDD" id="cd08875">
    <property type="entry name" value="START_ArGLABRA2_like"/>
    <property type="match status" value="1"/>
</dbReference>
<dbReference type="FunFam" id="1.10.10.60:FF:000197">
    <property type="entry name" value="Homeobox-leucine zipper protein REVOLUTA"/>
    <property type="match status" value="1"/>
</dbReference>
<dbReference type="Gene3D" id="3.30.530.20">
    <property type="match status" value="1"/>
</dbReference>
<dbReference type="Gene3D" id="1.10.10.60">
    <property type="entry name" value="Homeodomain-like"/>
    <property type="match status" value="1"/>
</dbReference>
<dbReference type="InterPro" id="IPR001356">
    <property type="entry name" value="HD"/>
</dbReference>
<dbReference type="InterPro" id="IPR044830">
    <property type="entry name" value="HD-Zip_III"/>
</dbReference>
<dbReference type="InterPro" id="IPR009057">
    <property type="entry name" value="Homeodomain-like_sf"/>
</dbReference>
<dbReference type="InterPro" id="IPR013978">
    <property type="entry name" value="MEKHLA"/>
</dbReference>
<dbReference type="InterPro" id="IPR023393">
    <property type="entry name" value="START-like_dom_sf"/>
</dbReference>
<dbReference type="InterPro" id="IPR002913">
    <property type="entry name" value="START_lipid-bd_dom"/>
</dbReference>
<dbReference type="PANTHER" id="PTHR45950">
    <property type="entry name" value="HOMEOBOX-LEUCINE ZIPPER PROTEIN ATHB-14"/>
    <property type="match status" value="1"/>
</dbReference>
<dbReference type="PANTHER" id="PTHR45950:SF28">
    <property type="entry name" value="HOMEOBOX-LEUCINE ZIPPER PROTEIN HOX10"/>
    <property type="match status" value="1"/>
</dbReference>
<dbReference type="Pfam" id="PF00046">
    <property type="entry name" value="Homeodomain"/>
    <property type="match status" value="1"/>
</dbReference>
<dbReference type="Pfam" id="PF08670">
    <property type="entry name" value="MEKHLA"/>
    <property type="match status" value="1"/>
</dbReference>
<dbReference type="Pfam" id="PF01852">
    <property type="entry name" value="START"/>
    <property type="match status" value="1"/>
</dbReference>
<dbReference type="SMART" id="SM00389">
    <property type="entry name" value="HOX"/>
    <property type="match status" value="1"/>
</dbReference>
<dbReference type="SMART" id="SM00234">
    <property type="entry name" value="START"/>
    <property type="match status" value="1"/>
</dbReference>
<dbReference type="SUPFAM" id="SSF55961">
    <property type="entry name" value="Bet v1-like"/>
    <property type="match status" value="1"/>
</dbReference>
<dbReference type="SUPFAM" id="SSF46689">
    <property type="entry name" value="Homeodomain-like"/>
    <property type="match status" value="1"/>
</dbReference>
<dbReference type="PROSITE" id="PS50071">
    <property type="entry name" value="HOMEOBOX_2"/>
    <property type="match status" value="1"/>
</dbReference>
<dbReference type="PROSITE" id="PS50848">
    <property type="entry name" value="START"/>
    <property type="match status" value="1"/>
</dbReference>
<feature type="chain" id="PRO_0000331693" description="Homeobox-leucine zipper protein HOX10">
    <location>
        <begin position="1"/>
        <end position="839"/>
    </location>
</feature>
<feature type="domain" description="START" evidence="4">
    <location>
        <begin position="155"/>
        <end position="383"/>
    </location>
</feature>
<feature type="DNA-binding region" description="Homeobox" evidence="3">
    <location>
        <begin position="24"/>
        <end position="87"/>
    </location>
</feature>
<feature type="region of interest" description="Disordered" evidence="5">
    <location>
        <begin position="1"/>
        <end position="24"/>
    </location>
</feature>
<feature type="region of interest" description="Disordered" evidence="5">
    <location>
        <begin position="132"/>
        <end position="157"/>
    </location>
</feature>
<feature type="coiled-coil region" evidence="2">
    <location>
        <begin position="91"/>
        <end position="134"/>
    </location>
</feature>
<feature type="sequence conflict" description="In Ref. 8; CAD89206." evidence="8" ref="8">
    <original>S</original>
    <variation>P</variation>
    <location>
        <position position="677"/>
    </location>
</feature>
<feature type="sequence conflict" description="In Ref. 8; CAD89206." evidence="8" ref="8">
    <original>K</original>
    <variation>R</variation>
    <location>
        <position position="778"/>
    </location>
</feature>
<feature type="sequence conflict" description="In Ref. 8; CAD89206." evidence="8" ref="8">
    <original>A</original>
    <variation>T</variation>
    <location>
        <position position="821"/>
    </location>
</feature>
<feature type="sequence conflict" description="In Ref. 8; CAD89206." evidence="8" ref="8">
    <original>S</original>
    <variation>T</variation>
    <location>
        <position position="824"/>
    </location>
</feature>
<organism>
    <name type="scientific">Oryza sativa subsp. japonica</name>
    <name type="common">Rice</name>
    <dbReference type="NCBI Taxonomy" id="39947"/>
    <lineage>
        <taxon>Eukaryota</taxon>
        <taxon>Viridiplantae</taxon>
        <taxon>Streptophyta</taxon>
        <taxon>Embryophyta</taxon>
        <taxon>Tracheophyta</taxon>
        <taxon>Spermatophyta</taxon>
        <taxon>Magnoliopsida</taxon>
        <taxon>Liliopsida</taxon>
        <taxon>Poales</taxon>
        <taxon>Poaceae</taxon>
        <taxon>BOP clade</taxon>
        <taxon>Oryzoideae</taxon>
        <taxon>Oryzeae</taxon>
        <taxon>Oryzinae</taxon>
        <taxon>Oryza</taxon>
        <taxon>Oryza sativa</taxon>
    </lineage>
</organism>
<protein>
    <recommendedName>
        <fullName>Homeobox-leucine zipper protein HOX10</fullName>
    </recommendedName>
    <alternativeName>
        <fullName>HD-ZIP protein HOX10</fullName>
    </alternativeName>
    <alternativeName>
        <fullName>Homeodomain transcription factor HOX10</fullName>
    </alternativeName>
    <alternativeName>
        <fullName>OsHB1</fullName>
    </alternativeName>
    <alternativeName>
        <fullName>OsHox10</fullName>
    </alternativeName>
</protein>
<evidence type="ECO:0000250" key="1"/>
<evidence type="ECO:0000255" key="2"/>
<evidence type="ECO:0000255" key="3">
    <source>
        <dbReference type="PROSITE-ProRule" id="PRU00108"/>
    </source>
</evidence>
<evidence type="ECO:0000255" key="4">
    <source>
        <dbReference type="PROSITE-ProRule" id="PRU00197"/>
    </source>
</evidence>
<evidence type="ECO:0000256" key="5">
    <source>
        <dbReference type="SAM" id="MobiDB-lite"/>
    </source>
</evidence>
<evidence type="ECO:0000269" key="6">
    <source>
    </source>
</evidence>
<evidence type="ECO:0000269" key="7">
    <source>
    </source>
</evidence>
<evidence type="ECO:0000305" key="8"/>
<keyword id="KW-0175">Coiled coil</keyword>
<keyword id="KW-0238">DNA-binding</keyword>
<keyword id="KW-0371">Homeobox</keyword>
<keyword id="KW-0539">Nucleus</keyword>
<keyword id="KW-1185">Reference proteome</keyword>
<keyword id="KW-0804">Transcription</keyword>
<keyword id="KW-0805">Transcription regulation</keyword>
<gene>
    <name type="primary">HOX10</name>
    <name type="synonym">HB1</name>
    <name type="ordered locus">Os03g0109400</name>
    <name type="ordered locus">LOC_Os03g01890</name>
    <name type="ORF">OsJ_008792</name>
    <name type="ORF">OSJNBb0043C10.12</name>
</gene>
<name>HOX10_ORYSJ</name>
<reference key="1">
    <citation type="submission" date="2003-10" db="EMBL/GenBank/DDBJ databases">
        <title>Molecular cloning of Oryza sativa homeodomain leucine-zipper protein Hox10 gene as well as the bioinformatics analysis.</title>
        <authorList>
            <person name="Shen W.-B."/>
            <person name="Yang L."/>
            <person name="Mo L.-X."/>
            <person name="Xu L.-L."/>
        </authorList>
    </citation>
    <scope>NUCLEOTIDE SEQUENCE [MRNA]</scope>
</reference>
<reference key="2">
    <citation type="journal article" date="2005" name="Genome Res.">
        <title>Sequence, annotation, and analysis of synteny between rice chromosome 3 and diverged grass species.</title>
        <authorList>
            <consortium name="The rice chromosome 3 sequencing consortium"/>
            <person name="Buell C.R."/>
            <person name="Yuan Q."/>
            <person name="Ouyang S."/>
            <person name="Liu J."/>
            <person name="Zhu W."/>
            <person name="Wang A."/>
            <person name="Maiti R."/>
            <person name="Haas B."/>
            <person name="Wortman J."/>
            <person name="Pertea M."/>
            <person name="Jones K.M."/>
            <person name="Kim M."/>
            <person name="Overton L."/>
            <person name="Tsitrin T."/>
            <person name="Fadrosh D."/>
            <person name="Bera J."/>
            <person name="Weaver B."/>
            <person name="Jin S."/>
            <person name="Johri S."/>
            <person name="Reardon M."/>
            <person name="Webb K."/>
            <person name="Hill J."/>
            <person name="Moffat K."/>
            <person name="Tallon L."/>
            <person name="Van Aken S."/>
            <person name="Lewis M."/>
            <person name="Utterback T."/>
            <person name="Feldblyum T."/>
            <person name="Zismann V."/>
            <person name="Iobst S."/>
            <person name="Hsiao J."/>
            <person name="de Vazeille A.R."/>
            <person name="Salzberg S.L."/>
            <person name="White O."/>
            <person name="Fraser C.M."/>
            <person name="Yu Y."/>
            <person name="Kim H."/>
            <person name="Rambo T."/>
            <person name="Currie J."/>
            <person name="Collura K."/>
            <person name="Kernodle-Thompson S."/>
            <person name="Wei F."/>
            <person name="Kudrna K."/>
            <person name="Ammiraju J.S.S."/>
            <person name="Luo M."/>
            <person name="Goicoechea J.L."/>
            <person name="Wing R.A."/>
            <person name="Henry D."/>
            <person name="Oates R."/>
            <person name="Palmer M."/>
            <person name="Pries G."/>
            <person name="Saski C."/>
            <person name="Simmons J."/>
            <person name="Soderlund C."/>
            <person name="Nelson W."/>
            <person name="de la Bastide M."/>
            <person name="Spiegel L."/>
            <person name="Nascimento L."/>
            <person name="Huang E."/>
            <person name="Preston R."/>
            <person name="Zutavern T."/>
            <person name="Palmer L."/>
            <person name="O'Shaughnessy A."/>
            <person name="Dike S."/>
            <person name="McCombie W.R."/>
            <person name="Minx P."/>
            <person name="Cordum H."/>
            <person name="Wilson R."/>
            <person name="Jin W."/>
            <person name="Lee H.R."/>
            <person name="Jiang J."/>
            <person name="Jackson S."/>
        </authorList>
    </citation>
    <scope>NUCLEOTIDE SEQUENCE [LARGE SCALE GENOMIC DNA]</scope>
    <source>
        <strain>cv. Nipponbare</strain>
    </source>
</reference>
<reference key="3">
    <citation type="journal article" date="2005" name="Nature">
        <title>The map-based sequence of the rice genome.</title>
        <authorList>
            <consortium name="International rice genome sequencing project (IRGSP)"/>
        </authorList>
    </citation>
    <scope>NUCLEOTIDE SEQUENCE [LARGE SCALE GENOMIC DNA]</scope>
    <source>
        <strain>cv. Nipponbare</strain>
    </source>
</reference>
<reference key="4">
    <citation type="journal article" date="2008" name="Nucleic Acids Res.">
        <title>The rice annotation project database (RAP-DB): 2008 update.</title>
        <authorList>
            <consortium name="The rice annotation project (RAP)"/>
        </authorList>
    </citation>
    <scope>GENOME REANNOTATION</scope>
    <source>
        <strain>cv. Nipponbare</strain>
    </source>
</reference>
<reference key="5">
    <citation type="journal article" date="2013" name="Rice">
        <title>Improvement of the Oryza sativa Nipponbare reference genome using next generation sequence and optical map data.</title>
        <authorList>
            <person name="Kawahara Y."/>
            <person name="de la Bastide M."/>
            <person name="Hamilton J.P."/>
            <person name="Kanamori H."/>
            <person name="McCombie W.R."/>
            <person name="Ouyang S."/>
            <person name="Schwartz D.C."/>
            <person name="Tanaka T."/>
            <person name="Wu J."/>
            <person name="Zhou S."/>
            <person name="Childs K.L."/>
            <person name="Davidson R.M."/>
            <person name="Lin H."/>
            <person name="Quesada-Ocampo L."/>
            <person name="Vaillancourt B."/>
            <person name="Sakai H."/>
            <person name="Lee S.S."/>
            <person name="Kim J."/>
            <person name="Numa H."/>
            <person name="Itoh T."/>
            <person name="Buell C.R."/>
            <person name="Matsumoto T."/>
        </authorList>
    </citation>
    <scope>GENOME REANNOTATION</scope>
    <source>
        <strain>cv. Nipponbare</strain>
    </source>
</reference>
<reference key="6">
    <citation type="journal article" date="2005" name="PLoS Biol.">
        <title>The genomes of Oryza sativa: a history of duplications.</title>
        <authorList>
            <person name="Yu J."/>
            <person name="Wang J."/>
            <person name="Lin W."/>
            <person name="Li S."/>
            <person name="Li H."/>
            <person name="Zhou J."/>
            <person name="Ni P."/>
            <person name="Dong W."/>
            <person name="Hu S."/>
            <person name="Zeng C."/>
            <person name="Zhang J."/>
            <person name="Zhang Y."/>
            <person name="Li R."/>
            <person name="Xu Z."/>
            <person name="Li S."/>
            <person name="Li X."/>
            <person name="Zheng H."/>
            <person name="Cong L."/>
            <person name="Lin L."/>
            <person name="Yin J."/>
            <person name="Geng J."/>
            <person name="Li G."/>
            <person name="Shi J."/>
            <person name="Liu J."/>
            <person name="Lv H."/>
            <person name="Li J."/>
            <person name="Wang J."/>
            <person name="Deng Y."/>
            <person name="Ran L."/>
            <person name="Shi X."/>
            <person name="Wang X."/>
            <person name="Wu Q."/>
            <person name="Li C."/>
            <person name="Ren X."/>
            <person name="Wang J."/>
            <person name="Wang X."/>
            <person name="Li D."/>
            <person name="Liu D."/>
            <person name="Zhang X."/>
            <person name="Ji Z."/>
            <person name="Zhao W."/>
            <person name="Sun Y."/>
            <person name="Zhang Z."/>
            <person name="Bao J."/>
            <person name="Han Y."/>
            <person name="Dong L."/>
            <person name="Ji J."/>
            <person name="Chen P."/>
            <person name="Wu S."/>
            <person name="Liu J."/>
            <person name="Xiao Y."/>
            <person name="Bu D."/>
            <person name="Tan J."/>
            <person name="Yang L."/>
            <person name="Ye C."/>
            <person name="Zhang J."/>
            <person name="Xu J."/>
            <person name="Zhou Y."/>
            <person name="Yu Y."/>
            <person name="Zhang B."/>
            <person name="Zhuang S."/>
            <person name="Wei H."/>
            <person name="Liu B."/>
            <person name="Lei M."/>
            <person name="Yu H."/>
            <person name="Li Y."/>
            <person name="Xu H."/>
            <person name="Wei S."/>
            <person name="He X."/>
            <person name="Fang L."/>
            <person name="Zhang Z."/>
            <person name="Zhang Y."/>
            <person name="Huang X."/>
            <person name="Su Z."/>
            <person name="Tong W."/>
            <person name="Li J."/>
            <person name="Tong Z."/>
            <person name="Li S."/>
            <person name="Ye J."/>
            <person name="Wang L."/>
            <person name="Fang L."/>
            <person name="Lei T."/>
            <person name="Chen C.-S."/>
            <person name="Chen H.-C."/>
            <person name="Xu Z."/>
            <person name="Li H."/>
            <person name="Huang H."/>
            <person name="Zhang F."/>
            <person name="Xu H."/>
            <person name="Li N."/>
            <person name="Zhao C."/>
            <person name="Li S."/>
            <person name="Dong L."/>
            <person name="Huang Y."/>
            <person name="Li L."/>
            <person name="Xi Y."/>
            <person name="Qi Q."/>
            <person name="Li W."/>
            <person name="Zhang B."/>
            <person name="Hu W."/>
            <person name="Zhang Y."/>
            <person name="Tian X."/>
            <person name="Jiao Y."/>
            <person name="Liang X."/>
            <person name="Jin J."/>
            <person name="Gao L."/>
            <person name="Zheng W."/>
            <person name="Hao B."/>
            <person name="Liu S.-M."/>
            <person name="Wang W."/>
            <person name="Yuan L."/>
            <person name="Cao M."/>
            <person name="McDermott J."/>
            <person name="Samudrala R."/>
            <person name="Wang J."/>
            <person name="Wong G.K.-S."/>
            <person name="Yang H."/>
        </authorList>
    </citation>
    <scope>NUCLEOTIDE SEQUENCE [LARGE SCALE GENOMIC DNA]</scope>
    <source>
        <strain>cv. Nipponbare</strain>
    </source>
</reference>
<reference key="7">
    <citation type="journal article" date="2003" name="Science">
        <title>Collection, mapping, and annotation of over 28,000 cDNA clones from japonica rice.</title>
        <authorList>
            <consortium name="The rice full-length cDNA consortium"/>
        </authorList>
    </citation>
    <scope>NUCLEOTIDE SEQUENCE [LARGE SCALE MRNA]</scope>
    <source>
        <strain>cv. Nipponbare</strain>
    </source>
</reference>
<reference key="8">
    <citation type="submission" date="2003-04" db="EMBL/GenBank/DDBJ databases">
        <title>A HD-ZIP homeobox gene involves in rice seed development.</title>
        <authorList>
            <person name="Duan K."/>
        </authorList>
    </citation>
    <scope>NUCLEOTIDE SEQUENCE [MRNA] OF 374-824</scope>
</reference>
<reference key="9">
    <citation type="journal article" date="2007" name="Proc. Natl. Acad. Sci. U.S.A.">
        <title>The small interfering RNA production pathway is required for shoot meristem initiation in rice.</title>
        <authorList>
            <person name="Nagasaki H."/>
            <person name="Itoh J."/>
            <person name="Hayashi K."/>
            <person name="Hibara K."/>
            <person name="Satoh-Nagasawa N."/>
            <person name="Nosaka M."/>
            <person name="Mukouhata M."/>
            <person name="Ashikari M."/>
            <person name="Kitano H."/>
            <person name="Matsuoka M."/>
            <person name="Nagato Y."/>
            <person name="Sato Y."/>
        </authorList>
    </citation>
    <scope>INDUCTION</scope>
</reference>
<reference key="10">
    <citation type="journal article" date="2008" name="Plant Mol. Biol.">
        <title>A genome-wide survey of HD-Zip genes in rice and analysis of drought-responsive family members.</title>
        <authorList>
            <person name="Agalou A."/>
            <person name="Purwantomo S."/>
            <person name="Oevernaes E."/>
            <person name="Johannesson H."/>
            <person name="Zhu X."/>
            <person name="Estiati A."/>
            <person name="de Kam R.J."/>
            <person name="Engstroem P."/>
            <person name="Slamet-Loedin I.H."/>
            <person name="Zhu Z."/>
            <person name="Wang M."/>
            <person name="Xiong L."/>
            <person name="Meijer A.H."/>
            <person name="Ouwerkerk P.B.F."/>
        </authorList>
    </citation>
    <scope>TISSUE SPECIFICITY</scope>
    <scope>GENE FAMILY</scope>
    <scope>NOMENCLATURE</scope>
</reference>
<accession>Q6TAQ6</accession>
<accession>B7ET29</accession>
<accession>Q70PQ5</accession>
<accession>Q8H7U9</accession>
<sequence>MAAAVAMRGSSSDGGGYDKVSGMDSGKYVRYTPEQVEALERVYADCPKPTSSRRQQLLRECPILANIEPKQIKVWFQNRRCRDKQRKESSRLQAVNRKLTAMNKLLMEENERLQKQVSQLVHENAHMRQQLQNTPLANDTSCESNVTTPQNPLRDASNPSGLLSIAEETLTEFLSKATGTAIDWVQMPGMKPGPDSVGIVAISHGCRGVAARACGLVNLEPTKVVEILKDRPSWFRDCRNLEVFTMIPAGNGGTVELVYTQLYAPTTLVPARDFWTLRYTTTMEDGSLVVCERSLSGSGGGPSAASAQQYVRAEMLPSGYLVRPCEGGGSIVHIVDHLDLEAWSVPEVLRPLYESSRVVAQKMTTAALRHIRQIAQETSGEVVYALGRQPAVLRTFSQRLSRGFNDAISGFNDDGWSIMGGDGVEDVVIACNSTKKIRSNSNAGIAFGAPGGIICAKASMLLQSVPPAVLVRFLREHRSEWADYNIDAYLASTLKTSACSLTGLRPMRFSGSQIIIPLAHTVENEEILEVVRLEGQPLTHDEALLSRDIHLLQLCTGIDEKSVGSSFQLVFAPIDDFPDETPLISSGFRVIPLDMKTDGASSGRTLDLASSLEVGSATAQASGDASADDCNLRSVLTIAFQFPYELHLQDSVAAMARQYVRSIVSAVQRVSMAISPSQTGLNAGQRIISGFPEAATLARWVCQSYHYHLGVELLSQSDGDAEQLLKMLWHYQDAILCCSFKEKPVFTFANKAGLDMLETSLVALQDLTLDRIFDEPGKEALFSNIPKLMEQGHVYLPSGVCMSGMGRHVSFDQAVAWKVLAEDSNVHCLAFCFVNWSFV</sequence>